<dbReference type="EMBL" id="CP001034">
    <property type="protein sequence ID" value="ACB83793.1"/>
    <property type="molecule type" value="Genomic_DNA"/>
</dbReference>
<dbReference type="RefSeq" id="WP_012446682.1">
    <property type="nucleotide sequence ID" value="NC_010718.1"/>
</dbReference>
<dbReference type="SMR" id="B2A4D9"/>
<dbReference type="FunCoup" id="B2A4D9">
    <property type="interactions" value="471"/>
</dbReference>
<dbReference type="STRING" id="457570.Nther_0194"/>
<dbReference type="KEGG" id="nth:Nther_0194"/>
<dbReference type="eggNOG" id="COG0087">
    <property type="taxonomic scope" value="Bacteria"/>
</dbReference>
<dbReference type="HOGENOM" id="CLU_044142_4_1_9"/>
<dbReference type="InParanoid" id="B2A4D9"/>
<dbReference type="OrthoDB" id="9806135at2"/>
<dbReference type="Proteomes" id="UP000001683">
    <property type="component" value="Chromosome"/>
</dbReference>
<dbReference type="GO" id="GO:0022625">
    <property type="term" value="C:cytosolic large ribosomal subunit"/>
    <property type="evidence" value="ECO:0007669"/>
    <property type="project" value="TreeGrafter"/>
</dbReference>
<dbReference type="GO" id="GO:0019843">
    <property type="term" value="F:rRNA binding"/>
    <property type="evidence" value="ECO:0007669"/>
    <property type="project" value="UniProtKB-UniRule"/>
</dbReference>
<dbReference type="GO" id="GO:0003735">
    <property type="term" value="F:structural constituent of ribosome"/>
    <property type="evidence" value="ECO:0007669"/>
    <property type="project" value="InterPro"/>
</dbReference>
<dbReference type="GO" id="GO:0006412">
    <property type="term" value="P:translation"/>
    <property type="evidence" value="ECO:0007669"/>
    <property type="project" value="UniProtKB-UniRule"/>
</dbReference>
<dbReference type="FunFam" id="2.40.30.10:FF:000004">
    <property type="entry name" value="50S ribosomal protein L3"/>
    <property type="match status" value="1"/>
</dbReference>
<dbReference type="FunFam" id="3.30.160.810:FF:000001">
    <property type="entry name" value="50S ribosomal protein L3"/>
    <property type="match status" value="1"/>
</dbReference>
<dbReference type="Gene3D" id="3.30.160.810">
    <property type="match status" value="1"/>
</dbReference>
<dbReference type="Gene3D" id="2.40.30.10">
    <property type="entry name" value="Translation factors"/>
    <property type="match status" value="1"/>
</dbReference>
<dbReference type="HAMAP" id="MF_01325_B">
    <property type="entry name" value="Ribosomal_uL3_B"/>
    <property type="match status" value="1"/>
</dbReference>
<dbReference type="InterPro" id="IPR000597">
    <property type="entry name" value="Ribosomal_uL3"/>
</dbReference>
<dbReference type="InterPro" id="IPR019927">
    <property type="entry name" value="Ribosomal_uL3_bac/org-type"/>
</dbReference>
<dbReference type="InterPro" id="IPR009000">
    <property type="entry name" value="Transl_B-barrel_sf"/>
</dbReference>
<dbReference type="NCBIfam" id="TIGR03625">
    <property type="entry name" value="L3_bact"/>
    <property type="match status" value="1"/>
</dbReference>
<dbReference type="PANTHER" id="PTHR11229">
    <property type="entry name" value="50S RIBOSOMAL PROTEIN L3"/>
    <property type="match status" value="1"/>
</dbReference>
<dbReference type="PANTHER" id="PTHR11229:SF16">
    <property type="entry name" value="LARGE RIBOSOMAL SUBUNIT PROTEIN UL3C"/>
    <property type="match status" value="1"/>
</dbReference>
<dbReference type="Pfam" id="PF00297">
    <property type="entry name" value="Ribosomal_L3"/>
    <property type="match status" value="1"/>
</dbReference>
<dbReference type="SUPFAM" id="SSF50447">
    <property type="entry name" value="Translation proteins"/>
    <property type="match status" value="1"/>
</dbReference>
<comment type="function">
    <text evidence="1">One of the primary rRNA binding proteins, it binds directly near the 3'-end of the 23S rRNA, where it nucleates assembly of the 50S subunit.</text>
</comment>
<comment type="subunit">
    <text evidence="1">Part of the 50S ribosomal subunit. Forms a cluster with proteins L14 and L19.</text>
</comment>
<comment type="similarity">
    <text evidence="1">Belongs to the universal ribosomal protein uL3 family.</text>
</comment>
<keyword id="KW-1185">Reference proteome</keyword>
<keyword id="KW-0687">Ribonucleoprotein</keyword>
<keyword id="KW-0689">Ribosomal protein</keyword>
<keyword id="KW-0694">RNA-binding</keyword>
<keyword id="KW-0699">rRNA-binding</keyword>
<proteinExistence type="inferred from homology"/>
<reference key="1">
    <citation type="submission" date="2008-04" db="EMBL/GenBank/DDBJ databases">
        <title>Complete sequence of chromosome of Natranaerobius thermophilus JW/NM-WN-LF.</title>
        <authorList>
            <consortium name="US DOE Joint Genome Institute"/>
            <person name="Copeland A."/>
            <person name="Lucas S."/>
            <person name="Lapidus A."/>
            <person name="Glavina del Rio T."/>
            <person name="Dalin E."/>
            <person name="Tice H."/>
            <person name="Bruce D."/>
            <person name="Goodwin L."/>
            <person name="Pitluck S."/>
            <person name="Chertkov O."/>
            <person name="Brettin T."/>
            <person name="Detter J.C."/>
            <person name="Han C."/>
            <person name="Kuske C.R."/>
            <person name="Schmutz J."/>
            <person name="Larimer F."/>
            <person name="Land M."/>
            <person name="Hauser L."/>
            <person name="Kyrpides N."/>
            <person name="Lykidis A."/>
            <person name="Mesbah N.M."/>
            <person name="Wiegel J."/>
        </authorList>
    </citation>
    <scope>NUCLEOTIDE SEQUENCE [LARGE SCALE GENOMIC DNA]</scope>
    <source>
        <strain>ATCC BAA-1301 / DSM 18059 / JW/NM-WN-LF</strain>
    </source>
</reference>
<protein>
    <recommendedName>
        <fullName evidence="1">Large ribosomal subunit protein uL3</fullName>
    </recommendedName>
    <alternativeName>
        <fullName evidence="2">50S ribosomal protein L3</fullName>
    </alternativeName>
</protein>
<accession>B2A4D9</accession>
<name>RL3_NATTJ</name>
<feature type="chain" id="PRO_1000141893" description="Large ribosomal subunit protein uL3">
    <location>
        <begin position="1"/>
        <end position="210"/>
    </location>
</feature>
<organism>
    <name type="scientific">Natranaerobius thermophilus (strain ATCC BAA-1301 / DSM 18059 / JW/NM-WN-LF)</name>
    <dbReference type="NCBI Taxonomy" id="457570"/>
    <lineage>
        <taxon>Bacteria</taxon>
        <taxon>Bacillati</taxon>
        <taxon>Bacillota</taxon>
        <taxon>Clostridia</taxon>
        <taxon>Natranaerobiales</taxon>
        <taxon>Natranaerobiaceae</taxon>
        <taxon>Natranaerobius</taxon>
    </lineage>
</organism>
<evidence type="ECO:0000255" key="1">
    <source>
        <dbReference type="HAMAP-Rule" id="MF_01325"/>
    </source>
</evidence>
<evidence type="ECO:0000305" key="2"/>
<sequence>MKKAILGKKVGMTQIFSEEGEVMPVTVVKAGPCSVVQKKVEDTDGYNAVQIGFEDKKENKTKKPEKGHFEKAGVNPKKHLTEFELESMENLEVGQELTVEQFEVGDQIDVTGTSKSKGFQGTIKRFKHSTGPKTHGSRFYRAPGSLGSMDISRVFKGQTLPGRMGGNTVTVQRLEVVDVDKENNLLLVKGAVPGPKKGLLKIVDSVKAKS</sequence>
<gene>
    <name evidence="1" type="primary">rplC</name>
    <name type="ordered locus">Nther_0194</name>
</gene>